<feature type="chain" id="PRO_0000167201" description="Small ribosomal subunit protein bS16">
    <location>
        <begin position="1"/>
        <end position="88"/>
    </location>
</feature>
<organism>
    <name type="scientific">Leptospira interrogans serogroup Icterohaemorrhagiae serovar Lai (strain 56601)</name>
    <dbReference type="NCBI Taxonomy" id="189518"/>
    <lineage>
        <taxon>Bacteria</taxon>
        <taxon>Pseudomonadati</taxon>
        <taxon>Spirochaetota</taxon>
        <taxon>Spirochaetia</taxon>
        <taxon>Leptospirales</taxon>
        <taxon>Leptospiraceae</taxon>
        <taxon>Leptospira</taxon>
    </lineage>
</organism>
<gene>
    <name evidence="1" type="primary">rpsP</name>
    <name type="ordered locus">LA_2391</name>
</gene>
<evidence type="ECO:0000255" key="1">
    <source>
        <dbReference type="HAMAP-Rule" id="MF_00385"/>
    </source>
</evidence>
<evidence type="ECO:0000305" key="2"/>
<accession>Q8F3L1</accession>
<keyword id="KW-1185">Reference proteome</keyword>
<keyword id="KW-0687">Ribonucleoprotein</keyword>
<keyword id="KW-0689">Ribosomal protein</keyword>
<name>RS16_LEPIN</name>
<dbReference type="EMBL" id="AE010300">
    <property type="protein sequence ID" value="AAN49590.1"/>
    <property type="status" value="ALT_INIT"/>
    <property type="molecule type" value="Genomic_DNA"/>
</dbReference>
<dbReference type="RefSeq" id="NP_712572.3">
    <property type="nucleotide sequence ID" value="NC_004342.2"/>
</dbReference>
<dbReference type="RefSeq" id="WP_000240010.1">
    <property type="nucleotide sequence ID" value="NC_004342.2"/>
</dbReference>
<dbReference type="SMR" id="Q8F3L1"/>
<dbReference type="FunCoup" id="Q8F3L1">
    <property type="interactions" value="504"/>
</dbReference>
<dbReference type="STRING" id="189518.LA_2391"/>
<dbReference type="PaxDb" id="189518-LA_2391"/>
<dbReference type="EnsemblBacteria" id="AAN49590">
    <property type="protein sequence ID" value="AAN49590"/>
    <property type="gene ID" value="LA_2391"/>
</dbReference>
<dbReference type="GeneID" id="61144854"/>
<dbReference type="KEGG" id="lil:LA_2391"/>
<dbReference type="PATRIC" id="fig|189518.3.peg.2372"/>
<dbReference type="HOGENOM" id="CLU_100590_5_2_12"/>
<dbReference type="InParanoid" id="Q8F3L1"/>
<dbReference type="OrthoDB" id="9807878at2"/>
<dbReference type="Proteomes" id="UP000001408">
    <property type="component" value="Chromosome I"/>
</dbReference>
<dbReference type="GO" id="GO:0005737">
    <property type="term" value="C:cytoplasm"/>
    <property type="evidence" value="ECO:0007669"/>
    <property type="project" value="UniProtKB-ARBA"/>
</dbReference>
<dbReference type="GO" id="GO:0015935">
    <property type="term" value="C:small ribosomal subunit"/>
    <property type="evidence" value="ECO:0000318"/>
    <property type="project" value="GO_Central"/>
</dbReference>
<dbReference type="GO" id="GO:0003735">
    <property type="term" value="F:structural constituent of ribosome"/>
    <property type="evidence" value="ECO:0000318"/>
    <property type="project" value="GO_Central"/>
</dbReference>
<dbReference type="GO" id="GO:0006412">
    <property type="term" value="P:translation"/>
    <property type="evidence" value="ECO:0007669"/>
    <property type="project" value="UniProtKB-UniRule"/>
</dbReference>
<dbReference type="FunFam" id="3.30.1320.10:FF:000010">
    <property type="entry name" value="30S ribosomal protein S16"/>
    <property type="match status" value="1"/>
</dbReference>
<dbReference type="Gene3D" id="3.30.1320.10">
    <property type="match status" value="1"/>
</dbReference>
<dbReference type="HAMAP" id="MF_00385">
    <property type="entry name" value="Ribosomal_bS16"/>
    <property type="match status" value="1"/>
</dbReference>
<dbReference type="InterPro" id="IPR000307">
    <property type="entry name" value="Ribosomal_bS16"/>
</dbReference>
<dbReference type="InterPro" id="IPR023803">
    <property type="entry name" value="Ribosomal_bS16_dom_sf"/>
</dbReference>
<dbReference type="NCBIfam" id="TIGR00002">
    <property type="entry name" value="S16"/>
    <property type="match status" value="1"/>
</dbReference>
<dbReference type="PANTHER" id="PTHR12919">
    <property type="entry name" value="30S RIBOSOMAL PROTEIN S16"/>
    <property type="match status" value="1"/>
</dbReference>
<dbReference type="PANTHER" id="PTHR12919:SF20">
    <property type="entry name" value="SMALL RIBOSOMAL SUBUNIT PROTEIN BS16M"/>
    <property type="match status" value="1"/>
</dbReference>
<dbReference type="Pfam" id="PF00886">
    <property type="entry name" value="Ribosomal_S16"/>
    <property type="match status" value="1"/>
</dbReference>
<dbReference type="SUPFAM" id="SSF54565">
    <property type="entry name" value="Ribosomal protein S16"/>
    <property type="match status" value="1"/>
</dbReference>
<protein>
    <recommendedName>
        <fullName evidence="1">Small ribosomal subunit protein bS16</fullName>
    </recommendedName>
    <alternativeName>
        <fullName evidence="2">30S ribosomal protein S16</fullName>
    </alternativeName>
</protein>
<comment type="similarity">
    <text evidence="1">Belongs to the bacterial ribosomal protein bS16 family.</text>
</comment>
<comment type="sequence caution" evidence="2">
    <conflict type="erroneous initiation">
        <sequence resource="EMBL-CDS" id="AAN49590"/>
    </conflict>
</comment>
<proteinExistence type="inferred from homology"/>
<reference key="1">
    <citation type="journal article" date="2003" name="Nature">
        <title>Unique physiological and pathogenic features of Leptospira interrogans revealed by whole-genome sequencing.</title>
        <authorList>
            <person name="Ren S.-X."/>
            <person name="Fu G."/>
            <person name="Jiang X.-G."/>
            <person name="Zeng R."/>
            <person name="Miao Y.-G."/>
            <person name="Xu H."/>
            <person name="Zhang Y.-X."/>
            <person name="Xiong H."/>
            <person name="Lu G."/>
            <person name="Lu L.-F."/>
            <person name="Jiang H.-Q."/>
            <person name="Jia J."/>
            <person name="Tu Y.-F."/>
            <person name="Jiang J.-X."/>
            <person name="Gu W.-Y."/>
            <person name="Zhang Y.-Q."/>
            <person name="Cai Z."/>
            <person name="Sheng H.-H."/>
            <person name="Yin H.-F."/>
            <person name="Zhang Y."/>
            <person name="Zhu G.-F."/>
            <person name="Wan M."/>
            <person name="Huang H.-L."/>
            <person name="Qian Z."/>
            <person name="Wang S.-Y."/>
            <person name="Ma W."/>
            <person name="Yao Z.-J."/>
            <person name="Shen Y."/>
            <person name="Qiang B.-Q."/>
            <person name="Xia Q.-C."/>
            <person name="Guo X.-K."/>
            <person name="Danchin A."/>
            <person name="Saint Girons I."/>
            <person name="Somerville R.L."/>
            <person name="Wen Y.-M."/>
            <person name="Shi M.-H."/>
            <person name="Chen Z."/>
            <person name="Xu J.-G."/>
            <person name="Zhao G.-P."/>
        </authorList>
    </citation>
    <scope>NUCLEOTIDE SEQUENCE [LARGE SCALE GENOMIC DNA]</scope>
    <source>
        <strain>56601</strain>
    </source>
</reference>
<sequence>MVKLRLQRTGTKHDPHYRIVAADSRSPRDGKFVDIVGHYHPAQIKEQTTFNKEKILTWLKNGAQPTGTVLNLFKNAGIWAEYKTTLKK</sequence>